<protein>
    <recommendedName>
        <fullName evidence="1">Urocanate hydratase</fullName>
        <shortName evidence="1">Urocanase</shortName>
        <ecNumber evidence="1">4.2.1.49</ecNumber>
    </recommendedName>
    <alternativeName>
        <fullName evidence="1">Imidazolonepropionate hydrolase</fullName>
    </alternativeName>
</protein>
<keyword id="KW-0963">Cytoplasm</keyword>
<keyword id="KW-0369">Histidine metabolism</keyword>
<keyword id="KW-0456">Lyase</keyword>
<keyword id="KW-0520">NAD</keyword>
<accession>Q8YD12</accession>
<feature type="chain" id="PRO_0000207336" description="Urocanate hydratase">
    <location>
        <begin position="1"/>
        <end position="557"/>
    </location>
</feature>
<feature type="region of interest" description="Disordered" evidence="2">
    <location>
        <begin position="1"/>
        <end position="20"/>
    </location>
</feature>
<feature type="active site" evidence="1">
    <location>
        <position position="410"/>
    </location>
</feature>
<feature type="binding site" evidence="1">
    <location>
        <begin position="52"/>
        <end position="53"/>
    </location>
    <ligand>
        <name>NAD(+)</name>
        <dbReference type="ChEBI" id="CHEBI:57540"/>
    </ligand>
</feature>
<feature type="binding site" evidence="1">
    <location>
        <position position="130"/>
    </location>
    <ligand>
        <name>NAD(+)</name>
        <dbReference type="ChEBI" id="CHEBI:57540"/>
    </ligand>
</feature>
<feature type="binding site" evidence="1">
    <location>
        <begin position="176"/>
        <end position="178"/>
    </location>
    <ligand>
        <name>NAD(+)</name>
        <dbReference type="ChEBI" id="CHEBI:57540"/>
    </ligand>
</feature>
<feature type="binding site" evidence="1">
    <location>
        <position position="196"/>
    </location>
    <ligand>
        <name>NAD(+)</name>
        <dbReference type="ChEBI" id="CHEBI:57540"/>
    </ligand>
</feature>
<feature type="binding site" evidence="1">
    <location>
        <position position="201"/>
    </location>
    <ligand>
        <name>NAD(+)</name>
        <dbReference type="ChEBI" id="CHEBI:57540"/>
    </ligand>
</feature>
<feature type="binding site" evidence="1">
    <location>
        <begin position="242"/>
        <end position="243"/>
    </location>
    <ligand>
        <name>NAD(+)</name>
        <dbReference type="ChEBI" id="CHEBI:57540"/>
    </ligand>
</feature>
<feature type="binding site" evidence="1">
    <location>
        <begin position="263"/>
        <end position="267"/>
    </location>
    <ligand>
        <name>NAD(+)</name>
        <dbReference type="ChEBI" id="CHEBI:57540"/>
    </ligand>
</feature>
<feature type="binding site" evidence="1">
    <location>
        <begin position="273"/>
        <end position="274"/>
    </location>
    <ligand>
        <name>NAD(+)</name>
        <dbReference type="ChEBI" id="CHEBI:57540"/>
    </ligand>
</feature>
<feature type="binding site" evidence="1">
    <location>
        <position position="322"/>
    </location>
    <ligand>
        <name>NAD(+)</name>
        <dbReference type="ChEBI" id="CHEBI:57540"/>
    </ligand>
</feature>
<feature type="binding site" evidence="1">
    <location>
        <position position="492"/>
    </location>
    <ligand>
        <name>NAD(+)</name>
        <dbReference type="ChEBI" id="CHEBI:57540"/>
    </ligand>
</feature>
<dbReference type="EC" id="4.2.1.49" evidence="1"/>
<dbReference type="EMBL" id="AE008918">
    <property type="protein sequence ID" value="AAL53607.1"/>
    <property type="molecule type" value="Genomic_DNA"/>
</dbReference>
<dbReference type="PIR" id="AD3555">
    <property type="entry name" value="AD3555"/>
</dbReference>
<dbReference type="RefSeq" id="WP_004682328.1">
    <property type="nucleotide sequence ID" value="NZ_GG703779.1"/>
</dbReference>
<dbReference type="SMR" id="Q8YD12"/>
<dbReference type="GeneID" id="29595670"/>
<dbReference type="KEGG" id="bme:BMEII0365"/>
<dbReference type="KEGG" id="bmel:DK63_2874"/>
<dbReference type="PATRIC" id="fig|224914.52.peg.3012"/>
<dbReference type="eggNOG" id="COG2987">
    <property type="taxonomic scope" value="Bacteria"/>
</dbReference>
<dbReference type="PhylomeDB" id="Q8YD12"/>
<dbReference type="UniPathway" id="UPA00379">
    <property type="reaction ID" value="UER00550"/>
</dbReference>
<dbReference type="Proteomes" id="UP000000419">
    <property type="component" value="Chromosome II"/>
</dbReference>
<dbReference type="GO" id="GO:0005737">
    <property type="term" value="C:cytoplasm"/>
    <property type="evidence" value="ECO:0007669"/>
    <property type="project" value="UniProtKB-SubCell"/>
</dbReference>
<dbReference type="GO" id="GO:0016153">
    <property type="term" value="F:urocanate hydratase activity"/>
    <property type="evidence" value="ECO:0007669"/>
    <property type="project" value="UniProtKB-UniRule"/>
</dbReference>
<dbReference type="GO" id="GO:0019556">
    <property type="term" value="P:L-histidine catabolic process to glutamate and formamide"/>
    <property type="evidence" value="ECO:0007669"/>
    <property type="project" value="UniProtKB-UniPathway"/>
</dbReference>
<dbReference type="GO" id="GO:0019557">
    <property type="term" value="P:L-histidine catabolic process to glutamate and formate"/>
    <property type="evidence" value="ECO:0007669"/>
    <property type="project" value="UniProtKB-UniPathway"/>
</dbReference>
<dbReference type="FunFam" id="3.40.50.10730:FF:000001">
    <property type="entry name" value="Urocanate hydratase"/>
    <property type="match status" value="1"/>
</dbReference>
<dbReference type="Gene3D" id="3.40.50.10730">
    <property type="entry name" value="Urocanase like domains"/>
    <property type="match status" value="1"/>
</dbReference>
<dbReference type="Gene3D" id="3.40.1770.10">
    <property type="entry name" value="Urocanase superfamily"/>
    <property type="match status" value="1"/>
</dbReference>
<dbReference type="HAMAP" id="MF_00577">
    <property type="entry name" value="HutU"/>
    <property type="match status" value="1"/>
</dbReference>
<dbReference type="InterPro" id="IPR055351">
    <property type="entry name" value="Urocanase"/>
</dbReference>
<dbReference type="InterPro" id="IPR023637">
    <property type="entry name" value="Urocanase-like"/>
</dbReference>
<dbReference type="InterPro" id="IPR035401">
    <property type="entry name" value="Urocanase_C"/>
</dbReference>
<dbReference type="InterPro" id="IPR038364">
    <property type="entry name" value="Urocanase_central_sf"/>
</dbReference>
<dbReference type="InterPro" id="IPR023636">
    <property type="entry name" value="Urocanase_CS"/>
</dbReference>
<dbReference type="InterPro" id="IPR035400">
    <property type="entry name" value="Urocanase_N"/>
</dbReference>
<dbReference type="InterPro" id="IPR035085">
    <property type="entry name" value="Urocanase_Rossmann-like"/>
</dbReference>
<dbReference type="InterPro" id="IPR036190">
    <property type="entry name" value="Urocanase_sf"/>
</dbReference>
<dbReference type="NCBIfam" id="TIGR01228">
    <property type="entry name" value="hutU"/>
    <property type="match status" value="1"/>
</dbReference>
<dbReference type="NCBIfam" id="NF003820">
    <property type="entry name" value="PRK05414.1"/>
    <property type="match status" value="1"/>
</dbReference>
<dbReference type="PANTHER" id="PTHR12216">
    <property type="entry name" value="UROCANATE HYDRATASE"/>
    <property type="match status" value="1"/>
</dbReference>
<dbReference type="PANTHER" id="PTHR12216:SF4">
    <property type="entry name" value="UROCANATE HYDRATASE"/>
    <property type="match status" value="1"/>
</dbReference>
<dbReference type="Pfam" id="PF01175">
    <property type="entry name" value="Urocanase"/>
    <property type="match status" value="1"/>
</dbReference>
<dbReference type="Pfam" id="PF17392">
    <property type="entry name" value="Urocanase_C"/>
    <property type="match status" value="1"/>
</dbReference>
<dbReference type="Pfam" id="PF17391">
    <property type="entry name" value="Urocanase_N"/>
    <property type="match status" value="1"/>
</dbReference>
<dbReference type="PIRSF" id="PIRSF001423">
    <property type="entry name" value="Urocanate_hydrat"/>
    <property type="match status" value="1"/>
</dbReference>
<dbReference type="SUPFAM" id="SSF111326">
    <property type="entry name" value="Urocanase"/>
    <property type="match status" value="1"/>
</dbReference>
<dbReference type="PROSITE" id="PS01233">
    <property type="entry name" value="UROCANASE"/>
    <property type="match status" value="1"/>
</dbReference>
<comment type="function">
    <text evidence="1">Catalyzes the conversion of urocanate to 4-imidazolone-5-propionate.</text>
</comment>
<comment type="catalytic activity">
    <reaction evidence="1">
        <text>4-imidazolone-5-propanoate = trans-urocanate + H2O</text>
        <dbReference type="Rhea" id="RHEA:13101"/>
        <dbReference type="ChEBI" id="CHEBI:15377"/>
        <dbReference type="ChEBI" id="CHEBI:17771"/>
        <dbReference type="ChEBI" id="CHEBI:77893"/>
        <dbReference type="EC" id="4.2.1.49"/>
    </reaction>
</comment>
<comment type="cofactor">
    <cofactor evidence="1">
        <name>NAD(+)</name>
        <dbReference type="ChEBI" id="CHEBI:57540"/>
    </cofactor>
    <text evidence="1">Binds 1 NAD(+) per subunit.</text>
</comment>
<comment type="pathway">
    <text evidence="1">Amino-acid degradation; L-histidine degradation into L-glutamate; N-formimidoyl-L-glutamate from L-histidine: step 2/3.</text>
</comment>
<comment type="subcellular location">
    <subcellularLocation>
        <location evidence="1">Cytoplasm</location>
    </subcellularLocation>
</comment>
<comment type="similarity">
    <text evidence="1">Belongs to the urocanase family.</text>
</comment>
<name>HUTU_BRUME</name>
<evidence type="ECO:0000255" key="1">
    <source>
        <dbReference type="HAMAP-Rule" id="MF_00577"/>
    </source>
</evidence>
<evidence type="ECO:0000256" key="2">
    <source>
        <dbReference type="SAM" id="MobiDB-lite"/>
    </source>
</evidence>
<reference key="1">
    <citation type="journal article" date="2002" name="Proc. Natl. Acad. Sci. U.S.A.">
        <title>The genome sequence of the facultative intracellular pathogen Brucella melitensis.</title>
        <authorList>
            <person name="DelVecchio V.G."/>
            <person name="Kapatral V."/>
            <person name="Redkar R.J."/>
            <person name="Patra G."/>
            <person name="Mujer C."/>
            <person name="Los T."/>
            <person name="Ivanova N."/>
            <person name="Anderson I."/>
            <person name="Bhattacharyya A."/>
            <person name="Lykidis A."/>
            <person name="Reznik G."/>
            <person name="Jablonski L."/>
            <person name="Larsen N."/>
            <person name="D'Souza M."/>
            <person name="Bernal A."/>
            <person name="Mazur M."/>
            <person name="Goltsman E."/>
            <person name="Selkov E."/>
            <person name="Elzer P.H."/>
            <person name="Hagius S."/>
            <person name="O'Callaghan D."/>
            <person name="Letesson J.-J."/>
            <person name="Haselkorn R."/>
            <person name="Kyrpides N.C."/>
            <person name="Overbeek R."/>
        </authorList>
    </citation>
    <scope>NUCLEOTIDE SEQUENCE [LARGE SCALE GENOMIC DNA]</scope>
    <source>
        <strain>ATCC 23456 / CCUG 17765 / NCTC 10094 / 16M</strain>
    </source>
</reference>
<gene>
    <name evidence="1" type="primary">hutU</name>
    <name type="ordered locus">BMEII0365</name>
</gene>
<proteinExistence type="inferred from homology"/>
<sequence length="557" mass="61242">MSNPRHNEREVRSPRGDELNAKSWLTEAPLRMLMNNLDPDVAERPHELVVYGGIGRAARTWDDFDRIVATLKTLNDDETLLVQSGKPVGVFRTHKDAPRVLIANSNLVPHWANWDHFNELDKKGLAMYGQMTAGSWIYIGAQGIVQGTYETFVEAGRQHYGGNLKGRWILTGGLGGMGGAQPLAAVMAGACCLAVECDETRADFRLRTRYVDEKTHSLDEALAKIDAWTKAGEAKSIALIGNAAEIFPELVKRGVKPDIVTDQTSAHDPVHGYLPLGWTVAEWRAKQENDPKVVEKAARASMKVQVQAMLDFWNAGIPTVDYGNNIRQMALEEGLENAFAFPGFVPAYIRPLFCRGIGPFRWAALSGDPEDIAKTDAKVKELLPDNKHLHNWLDMAKERIAFQGLPARICWVGLGDRHRLGLAFNEMVRNGELKAPIVIGRDHLDSGSVASPNRETEAMKDGSDAVSDWPLLNALLNTASGATWVSLHHGGGVGMGFSQHAGMVICCDGTEDADRRLERVLWNDPATGVMRHADAGYDIALDWARKQGLRLPAILGN</sequence>
<organism>
    <name type="scientific">Brucella melitensis biotype 1 (strain ATCC 23456 / CCUG 17765 / NCTC 10094 / 16M)</name>
    <dbReference type="NCBI Taxonomy" id="224914"/>
    <lineage>
        <taxon>Bacteria</taxon>
        <taxon>Pseudomonadati</taxon>
        <taxon>Pseudomonadota</taxon>
        <taxon>Alphaproteobacteria</taxon>
        <taxon>Hyphomicrobiales</taxon>
        <taxon>Brucellaceae</taxon>
        <taxon>Brucella/Ochrobactrum group</taxon>
        <taxon>Brucella</taxon>
    </lineage>
</organism>